<dbReference type="EC" id="2.7.10.2"/>
<dbReference type="EMBL" id="U43408">
    <property type="protein sequence ID" value="AAC50427.1"/>
    <property type="molecule type" value="mRNA"/>
</dbReference>
<dbReference type="EMBL" id="AF097738">
    <property type="protein sequence ID" value="AAC99412.1"/>
    <property type="molecule type" value="Genomic_DNA"/>
</dbReference>
<dbReference type="EMBL" id="BC035782">
    <property type="protein sequence ID" value="AAH35782.1"/>
    <property type="molecule type" value="mRNA"/>
</dbReference>
<dbReference type="CCDS" id="CCDS45602.1">
    <molecule id="Q13470-2"/>
</dbReference>
<dbReference type="CCDS" id="CCDS58510.1">
    <molecule id="Q13470-1"/>
</dbReference>
<dbReference type="RefSeq" id="NP_001238831.1">
    <molecule id="Q13470-1"/>
    <property type="nucleotide sequence ID" value="NM_001251902.3"/>
</dbReference>
<dbReference type="RefSeq" id="NP_003976.2">
    <molecule id="Q13470-2"/>
    <property type="nucleotide sequence ID" value="NM_003985.6"/>
</dbReference>
<dbReference type="RefSeq" id="XP_011522347.1">
    <molecule id="Q13470-2"/>
    <property type="nucleotide sequence ID" value="XM_011524045.3"/>
</dbReference>
<dbReference type="RefSeq" id="XP_054188002.1">
    <molecule id="Q13470-2"/>
    <property type="nucleotide sequence ID" value="XM_054332027.1"/>
</dbReference>
<dbReference type="PDB" id="7T8J">
    <property type="method" value="X-ray"/>
    <property type="resolution" value="1.89 A"/>
    <property type="chains" value="A=590-666"/>
</dbReference>
<dbReference type="PDB" id="7TCY">
    <property type="method" value="X-ray"/>
    <property type="resolution" value="1.54 A"/>
    <property type="chains" value="A/B=589-666"/>
</dbReference>
<dbReference type="PDB" id="7TDY">
    <property type="method" value="X-ray"/>
    <property type="resolution" value="1.53 A"/>
    <property type="chains" value="A=590-666"/>
</dbReference>
<dbReference type="PDB" id="7U4W">
    <property type="method" value="X-ray"/>
    <property type="resolution" value="2.10 A"/>
    <property type="chains" value="A=590-666"/>
</dbReference>
<dbReference type="PDB" id="7U4Z">
    <property type="method" value="X-ray"/>
    <property type="resolution" value="2.03 A"/>
    <property type="chains" value="A=590-666"/>
</dbReference>
<dbReference type="PDB" id="9CPL">
    <property type="method" value="X-ray"/>
    <property type="resolution" value="2.40 A"/>
    <property type="chains" value="A=590-666"/>
</dbReference>
<dbReference type="PDBsum" id="7T8J"/>
<dbReference type="PDBsum" id="7TCY"/>
<dbReference type="PDBsum" id="7TDY"/>
<dbReference type="PDBsum" id="7U4W"/>
<dbReference type="PDBsum" id="7U4Z"/>
<dbReference type="PDBsum" id="9CPL"/>
<dbReference type="SMR" id="Q13470"/>
<dbReference type="BioGRID" id="114253">
    <property type="interactions" value="46"/>
</dbReference>
<dbReference type="FunCoup" id="Q13470">
    <property type="interactions" value="451"/>
</dbReference>
<dbReference type="IntAct" id="Q13470">
    <property type="interactions" value="41"/>
</dbReference>
<dbReference type="MINT" id="Q13470"/>
<dbReference type="STRING" id="9606.ENSP00000459799"/>
<dbReference type="BindingDB" id="Q13470"/>
<dbReference type="ChEMBL" id="CHEMBL5334"/>
<dbReference type="DrugBank" id="DB12010">
    <property type="generic name" value="Fostamatinib"/>
</dbReference>
<dbReference type="DrugCentral" id="Q13470"/>
<dbReference type="GuidetoPHARMACOLOGY" id="2245"/>
<dbReference type="GlyGen" id="Q13470">
    <property type="glycosylation" value="2 sites"/>
</dbReference>
<dbReference type="iPTMnet" id="Q13470"/>
<dbReference type="PhosphoSitePlus" id="Q13470"/>
<dbReference type="BioMuta" id="TNK1"/>
<dbReference type="DMDM" id="116242821"/>
<dbReference type="CPTAC" id="CPTAC-2878"/>
<dbReference type="jPOST" id="Q13470"/>
<dbReference type="MassIVE" id="Q13470"/>
<dbReference type="PaxDb" id="9606-ENSP00000459799"/>
<dbReference type="PeptideAtlas" id="Q13470"/>
<dbReference type="ProteomicsDB" id="59467">
    <molecule id="Q13470-1"/>
</dbReference>
<dbReference type="ProteomicsDB" id="59468">
    <molecule id="Q13470-2"/>
</dbReference>
<dbReference type="Pumba" id="Q13470"/>
<dbReference type="Antibodypedia" id="6049">
    <property type="antibodies" value="361 antibodies from 34 providers"/>
</dbReference>
<dbReference type="DNASU" id="8711"/>
<dbReference type="Ensembl" id="ENST00000570896.5">
    <molecule id="Q13470-2"/>
    <property type="protein sequence ID" value="ENSP00000458834.1"/>
    <property type="gene ID" value="ENSG00000174292.13"/>
</dbReference>
<dbReference type="Ensembl" id="ENST00000576812.5">
    <molecule id="Q13470-1"/>
    <property type="protein sequence ID" value="ENSP00000459799.1"/>
    <property type="gene ID" value="ENSG00000174292.13"/>
</dbReference>
<dbReference type="Ensembl" id="ENST00000639010.1">
    <molecule id="Q13470-2"/>
    <property type="protein sequence ID" value="ENSP00000491712.1"/>
    <property type="gene ID" value="ENSG00000283781.1"/>
</dbReference>
<dbReference type="Ensembl" id="ENST00000639430.1">
    <molecule id="Q13470-1"/>
    <property type="protein sequence ID" value="ENSP00000491136.1"/>
    <property type="gene ID" value="ENSG00000283781.1"/>
</dbReference>
<dbReference type="Ensembl" id="ENST00000688331.1">
    <molecule id="Q13470-2"/>
    <property type="protein sequence ID" value="ENSP00000509611.1"/>
    <property type="gene ID" value="ENSG00000174292.13"/>
</dbReference>
<dbReference type="GeneID" id="8711"/>
<dbReference type="KEGG" id="hsa:8711"/>
<dbReference type="MANE-Select" id="ENST00000688331.1">
    <molecule id="Q13470-2"/>
    <property type="protein sequence ID" value="ENSP00000509611.1"/>
    <property type="RefSeq nucleotide sequence ID" value="NM_003985.6"/>
    <property type="RefSeq protein sequence ID" value="NP_003976.2"/>
</dbReference>
<dbReference type="UCSC" id="uc002ggi.5">
    <molecule id="Q13470-1"/>
    <property type="organism name" value="human"/>
</dbReference>
<dbReference type="AGR" id="HGNC:11940"/>
<dbReference type="CTD" id="8711"/>
<dbReference type="DisGeNET" id="8711"/>
<dbReference type="GeneCards" id="TNK1"/>
<dbReference type="HGNC" id="HGNC:11940">
    <property type="gene designation" value="TNK1"/>
</dbReference>
<dbReference type="HPA" id="ENSG00000174292">
    <property type="expression patterns" value="Low tissue specificity"/>
</dbReference>
<dbReference type="MIM" id="608076">
    <property type="type" value="gene"/>
</dbReference>
<dbReference type="neXtProt" id="NX_Q13470"/>
<dbReference type="OpenTargets" id="ENSG00000174292"/>
<dbReference type="PharmGKB" id="PA36630"/>
<dbReference type="VEuPathDB" id="HostDB:ENSG00000174292"/>
<dbReference type="eggNOG" id="KOG0199">
    <property type="taxonomic scope" value="Eukaryota"/>
</dbReference>
<dbReference type="GeneTree" id="ENSGT00940000162159"/>
<dbReference type="HOGENOM" id="CLU_000288_7_39_1"/>
<dbReference type="InParanoid" id="Q13470"/>
<dbReference type="OMA" id="IMMNLEH"/>
<dbReference type="OrthoDB" id="635774at2759"/>
<dbReference type="PAN-GO" id="Q13470">
    <property type="GO annotations" value="6 GO annotations based on evolutionary models"/>
</dbReference>
<dbReference type="PhylomeDB" id="Q13470"/>
<dbReference type="TreeFam" id="TF316643"/>
<dbReference type="PathwayCommons" id="Q13470"/>
<dbReference type="SignaLink" id="Q13470"/>
<dbReference type="SIGNOR" id="Q13470"/>
<dbReference type="BioGRID-ORCS" id="8711">
    <property type="hits" value="13 hits in 1191 CRISPR screens"/>
</dbReference>
<dbReference type="ChiTaRS" id="TNK1">
    <property type="organism name" value="human"/>
</dbReference>
<dbReference type="GenomeRNAi" id="8711"/>
<dbReference type="Pharos" id="Q13470">
    <property type="development level" value="Tchem"/>
</dbReference>
<dbReference type="PRO" id="PR:Q13470"/>
<dbReference type="Proteomes" id="UP000005640">
    <property type="component" value="Chromosome 17"/>
</dbReference>
<dbReference type="RNAct" id="Q13470">
    <property type="molecule type" value="protein"/>
</dbReference>
<dbReference type="Bgee" id="ENSG00000174292">
    <property type="expression patterns" value="Expressed in mucosa of transverse colon and 97 other cell types or tissues"/>
</dbReference>
<dbReference type="ExpressionAtlas" id="Q13470">
    <property type="expression patterns" value="baseline and differential"/>
</dbReference>
<dbReference type="GO" id="GO:0005737">
    <property type="term" value="C:cytoplasm"/>
    <property type="evidence" value="ECO:0000314"/>
    <property type="project" value="UniProtKB"/>
</dbReference>
<dbReference type="GO" id="GO:0016020">
    <property type="term" value="C:membrane"/>
    <property type="evidence" value="ECO:0000314"/>
    <property type="project" value="UniProtKB"/>
</dbReference>
<dbReference type="GO" id="GO:0005886">
    <property type="term" value="C:plasma membrane"/>
    <property type="evidence" value="ECO:0000318"/>
    <property type="project" value="GO_Central"/>
</dbReference>
<dbReference type="GO" id="GO:0005524">
    <property type="term" value="F:ATP binding"/>
    <property type="evidence" value="ECO:0000314"/>
    <property type="project" value="UniProtKB"/>
</dbReference>
<dbReference type="GO" id="GO:0004715">
    <property type="term" value="F:non-membrane spanning protein tyrosine kinase activity"/>
    <property type="evidence" value="ECO:0000304"/>
    <property type="project" value="ProtInc"/>
</dbReference>
<dbReference type="GO" id="GO:0004713">
    <property type="term" value="F:protein tyrosine kinase activity"/>
    <property type="evidence" value="ECO:0000314"/>
    <property type="project" value="UniProtKB"/>
</dbReference>
<dbReference type="GO" id="GO:0046777">
    <property type="term" value="P:protein autophosphorylation"/>
    <property type="evidence" value="ECO:0000314"/>
    <property type="project" value="UniProtKB"/>
</dbReference>
<dbReference type="GO" id="GO:0006468">
    <property type="term" value="P:protein phosphorylation"/>
    <property type="evidence" value="ECO:0000304"/>
    <property type="project" value="ProtInc"/>
</dbReference>
<dbReference type="CDD" id="cd09539">
    <property type="entry name" value="SAM_TNK-like"/>
    <property type="match status" value="1"/>
</dbReference>
<dbReference type="CDD" id="cd14328">
    <property type="entry name" value="UBA_TNK1"/>
    <property type="match status" value="1"/>
</dbReference>
<dbReference type="FunFam" id="2.30.30.40:FF:000243">
    <property type="entry name" value="Non-receptor tyrosine-protein kinase TNK1 isoform X1"/>
    <property type="match status" value="1"/>
</dbReference>
<dbReference type="FunFam" id="1.10.510.10:FF:000619">
    <property type="entry name" value="non-receptor tyrosine-protein kinase TNK1 isoform X1"/>
    <property type="match status" value="1"/>
</dbReference>
<dbReference type="FunFam" id="3.30.200.20:FF:000400">
    <property type="entry name" value="Tyrosine kinase non receptor 1"/>
    <property type="match status" value="1"/>
</dbReference>
<dbReference type="Gene3D" id="3.30.200.20">
    <property type="entry name" value="Phosphorylase Kinase, domain 1"/>
    <property type="match status" value="1"/>
</dbReference>
<dbReference type="Gene3D" id="1.10.510.10">
    <property type="entry name" value="Transferase(Phosphotransferase) domain 1"/>
    <property type="match status" value="1"/>
</dbReference>
<dbReference type="InterPro" id="IPR055175">
    <property type="entry name" value="ACK/TNK-like_SAM"/>
</dbReference>
<dbReference type="InterPro" id="IPR011009">
    <property type="entry name" value="Kinase-like_dom_sf"/>
</dbReference>
<dbReference type="InterPro" id="IPR050198">
    <property type="entry name" value="Non-receptor_tyrosine_kinases"/>
</dbReference>
<dbReference type="InterPro" id="IPR000719">
    <property type="entry name" value="Prot_kinase_dom"/>
</dbReference>
<dbReference type="InterPro" id="IPR017441">
    <property type="entry name" value="Protein_kinase_ATP_BS"/>
</dbReference>
<dbReference type="InterPro" id="IPR001245">
    <property type="entry name" value="Ser-Thr/Tyr_kinase_cat_dom"/>
</dbReference>
<dbReference type="InterPro" id="IPR001452">
    <property type="entry name" value="SH3_domain"/>
</dbReference>
<dbReference type="InterPro" id="IPR049587">
    <property type="entry name" value="TNK-like_SAM"/>
</dbReference>
<dbReference type="InterPro" id="IPR008266">
    <property type="entry name" value="Tyr_kinase_AS"/>
</dbReference>
<dbReference type="InterPro" id="IPR020635">
    <property type="entry name" value="Tyr_kinase_cat_dom"/>
</dbReference>
<dbReference type="PANTHER" id="PTHR24418">
    <property type="entry name" value="TYROSINE-PROTEIN KINASE"/>
    <property type="match status" value="1"/>
</dbReference>
<dbReference type="Pfam" id="PF07714">
    <property type="entry name" value="PK_Tyr_Ser-Thr"/>
    <property type="match status" value="1"/>
</dbReference>
<dbReference type="Pfam" id="PF22931">
    <property type="entry name" value="SAM_TNK"/>
    <property type="match status" value="1"/>
</dbReference>
<dbReference type="PRINTS" id="PR00109">
    <property type="entry name" value="TYRKINASE"/>
</dbReference>
<dbReference type="SMART" id="SM00326">
    <property type="entry name" value="SH3"/>
    <property type="match status" value="1"/>
</dbReference>
<dbReference type="SMART" id="SM00219">
    <property type="entry name" value="TyrKc"/>
    <property type="match status" value="1"/>
</dbReference>
<dbReference type="SUPFAM" id="SSF56112">
    <property type="entry name" value="Protein kinase-like (PK-like)"/>
    <property type="match status" value="1"/>
</dbReference>
<dbReference type="PROSITE" id="PS00107">
    <property type="entry name" value="PROTEIN_KINASE_ATP"/>
    <property type="match status" value="1"/>
</dbReference>
<dbReference type="PROSITE" id="PS50011">
    <property type="entry name" value="PROTEIN_KINASE_DOM"/>
    <property type="match status" value="1"/>
</dbReference>
<dbReference type="PROSITE" id="PS00109">
    <property type="entry name" value="PROTEIN_KINASE_TYR"/>
    <property type="match status" value="1"/>
</dbReference>
<dbReference type="PROSITE" id="PS50002">
    <property type="entry name" value="SH3"/>
    <property type="match status" value="1"/>
</dbReference>
<proteinExistence type="evidence at protein level"/>
<name>TNK1_HUMAN</name>
<keyword id="KW-0002">3D-structure</keyword>
<keyword id="KW-0025">Alternative splicing</keyword>
<keyword id="KW-0067">ATP-binding</keyword>
<keyword id="KW-0963">Cytoplasm</keyword>
<keyword id="KW-0418">Kinase</keyword>
<keyword id="KW-0472">Membrane</keyword>
<keyword id="KW-0547">Nucleotide-binding</keyword>
<keyword id="KW-0597">Phosphoprotein</keyword>
<keyword id="KW-1267">Proteomics identification</keyword>
<keyword id="KW-1185">Reference proteome</keyword>
<keyword id="KW-0728">SH3 domain</keyword>
<keyword id="KW-0808">Transferase</keyword>
<keyword id="KW-0829">Tyrosine-protein kinase</keyword>
<gene>
    <name evidence="14" type="primary">TNK1</name>
</gene>
<reference evidence="12 13" key="1">
    <citation type="journal article" date="1996" name="Oncogene">
        <title>Tnk1: a novel intracellular tyrosine kinase gene isolated from human umbilical cord blood CD34+/Lin-/CD38- stem/progenitor cells.</title>
        <authorList>
            <person name="Hoehn G.T."/>
            <person name="Stokland T."/>
            <person name="Amin S."/>
            <person name="Ramirez M."/>
            <person name="Hawkins A.L."/>
            <person name="Griffin C.A."/>
            <person name="Small D."/>
            <person name="Civin C.I."/>
        </authorList>
    </citation>
    <scope>NUCLEOTIDE SEQUENCE [MRNA] (ISOFORM 1)</scope>
    <scope>VARIANT MET-598</scope>
    <scope>TISSUE SPECIFICITY</scope>
    <scope>CHROMOSOMAL LOCATION</scope>
    <source>
        <tissue evidence="13">Umbilical cord blood</tissue>
    </source>
</reference>
<reference evidence="14" key="2">
    <citation type="submission" date="1998-10" db="EMBL/GenBank/DDBJ databases">
        <title>Genomic structure and chromosomal mapping of the human non-receptor tyrosine kinase gene, Tnk1.</title>
        <authorList>
            <person name="Hoehn G.T."/>
            <person name="Felschow D.M."/>
            <person name="Civin C.I."/>
        </authorList>
    </citation>
    <scope>NUCLEOTIDE SEQUENCE [GENOMIC DNA]</scope>
    <scope>VARIANT MET-598</scope>
</reference>
<reference evidence="12 15" key="3">
    <citation type="journal article" date="2004" name="Genome Res.">
        <title>The status, quality, and expansion of the NIH full-length cDNA project: the Mammalian Gene Collection (MGC).</title>
        <authorList>
            <consortium name="The MGC Project Team"/>
        </authorList>
    </citation>
    <scope>NUCLEOTIDE SEQUENCE [LARGE SCALE MRNA] (ISOFORM 2)</scope>
    <source>
        <tissue evidence="15">Ovary</tissue>
    </source>
</reference>
<reference evidence="12" key="4">
    <citation type="journal article" date="2000" name="Biochem. Biophys. Res. Commun.">
        <title>Characterization of the tyrosine kinase Tnk1 and its binding with phospholipase C-gamma1.</title>
        <authorList>
            <person name="Felschow D.M."/>
            <person name="Civin C.I."/>
            <person name="Hoehn G.T."/>
        </authorList>
    </citation>
    <scope>FUNCTION</scope>
    <scope>SUBCELLULAR LOCATION</scope>
    <scope>TISSUE SPECIFICITY</scope>
    <scope>AUTOPHOSPHORYLATION</scope>
    <scope>INTERACTION WITH PLCG1</scope>
</reference>
<reference key="5">
    <citation type="journal article" date="2006" name="Cell">
        <title>Global, in vivo, and site-specific phosphorylation dynamics in signaling networks.</title>
        <authorList>
            <person name="Olsen J.V."/>
            <person name="Blagoev B."/>
            <person name="Gnad F."/>
            <person name="Macek B."/>
            <person name="Kumar C."/>
            <person name="Mortensen P."/>
            <person name="Mann M."/>
        </authorList>
    </citation>
    <scope>IDENTIFICATION BY MASS SPECTROMETRY [LARGE SCALE ANALYSIS]</scope>
    <source>
        <tissue>Cervix carcinoma</tissue>
    </source>
</reference>
<reference key="6">
    <citation type="journal article" date="2008" name="Cancer Res.">
        <title>Tnk1/Kos1 knockout mice develop spontaneous tumors.</title>
        <authorList>
            <person name="Hoare S."/>
            <person name="Hoare K."/>
            <person name="Reinhard M.K."/>
            <person name="Lee Y.J."/>
            <person name="Oh S.P."/>
            <person name="May W.S. Jr."/>
        </authorList>
    </citation>
    <scope>FUNCTION</scope>
</reference>
<reference key="7">
    <citation type="journal article" date="2008" name="Mol. Cell">
        <title>Kinase-selective enrichment enables quantitative phosphoproteomics of the kinome across the cell cycle.</title>
        <authorList>
            <person name="Daub H."/>
            <person name="Olsen J.V."/>
            <person name="Bairlein M."/>
            <person name="Gnad F."/>
            <person name="Oppermann F.S."/>
            <person name="Korner R."/>
            <person name="Greff Z."/>
            <person name="Keri G."/>
            <person name="Stemmann O."/>
            <person name="Mann M."/>
        </authorList>
    </citation>
    <scope>PHOSPHORYLATION [LARGE SCALE ANALYSIS] AT SER-60; SER-255; SER-502; THR-514 AND SER-582</scope>
    <scope>PHOSPHORYLATION [LARGE SCALE ANALYSIS] AT SER-411 (ISOFORM 2)</scope>
    <scope>IDENTIFICATION BY MASS SPECTROMETRY [LARGE SCALE ANALYSIS]</scope>
    <source>
        <tissue>Cervix carcinoma</tissue>
    </source>
</reference>
<reference key="8">
    <citation type="journal article" date="2008" name="Proc. Natl. Acad. Sci. U.S.A.">
        <title>A quantitative atlas of mitotic phosphorylation.</title>
        <authorList>
            <person name="Dephoure N."/>
            <person name="Zhou C."/>
            <person name="Villen J."/>
            <person name="Beausoleil S.A."/>
            <person name="Bakalarski C.E."/>
            <person name="Elledge S.J."/>
            <person name="Gygi S.P."/>
        </authorList>
    </citation>
    <scope>PHOSPHORYLATION [LARGE SCALE ANALYSIS] AT SER-502 AND SER-519</scope>
    <scope>IDENTIFICATION BY MASS SPECTROMETRY [LARGE SCALE ANALYSIS]</scope>
    <source>
        <tissue>Cervix carcinoma</tissue>
    </source>
</reference>
<reference key="9">
    <citation type="journal article" date="2009" name="Mol. Cell. Proteomics">
        <title>Large-scale proteomics analysis of the human kinome.</title>
        <authorList>
            <person name="Oppermann F.S."/>
            <person name="Gnad F."/>
            <person name="Olsen J.V."/>
            <person name="Hornberger R."/>
            <person name="Greff Z."/>
            <person name="Keri G."/>
            <person name="Mann M."/>
            <person name="Daub H."/>
        </authorList>
    </citation>
    <scope>PHOSPHORYLATION [LARGE SCALE ANALYSIS] AT SER-255 AND SER-502</scope>
    <scope>PHOSPHORYLATION [LARGE SCALE ANALYSIS] AT SER-411 (ISOFORM 2)</scope>
    <scope>IDENTIFICATION BY MASS SPECTROMETRY [LARGE SCALE ANALYSIS]</scope>
</reference>
<reference key="10">
    <citation type="journal article" date="2010" name="Sci. Signal.">
        <title>Quantitative phosphoproteomics reveals widespread full phosphorylation site occupancy during mitosis.</title>
        <authorList>
            <person name="Olsen J.V."/>
            <person name="Vermeulen M."/>
            <person name="Santamaria A."/>
            <person name="Kumar C."/>
            <person name="Miller M.L."/>
            <person name="Jensen L.J."/>
            <person name="Gnad F."/>
            <person name="Cox J."/>
            <person name="Jensen T.S."/>
            <person name="Nigg E.A."/>
            <person name="Brunak S."/>
            <person name="Mann M."/>
        </authorList>
    </citation>
    <scope>PHOSPHORYLATION [LARGE SCALE ANALYSIS] AT SER-502 AND THR-514</scope>
    <scope>IDENTIFICATION BY MASS SPECTROMETRY [LARGE SCALE ANALYSIS]</scope>
    <source>
        <tissue>Cervix carcinoma</tissue>
    </source>
</reference>
<reference key="11">
    <citation type="journal article" date="2011" name="Sci. Signal.">
        <title>System-wide temporal characterization of the proteome and phosphoproteome of human embryonic stem cell differentiation.</title>
        <authorList>
            <person name="Rigbolt K.T."/>
            <person name="Prokhorova T.A."/>
            <person name="Akimov V."/>
            <person name="Henningsen J."/>
            <person name="Johansen P.T."/>
            <person name="Kratchmarova I."/>
            <person name="Kassem M."/>
            <person name="Mann M."/>
            <person name="Olsen J.V."/>
            <person name="Blagoev B."/>
        </authorList>
    </citation>
    <scope>PHOSPHORYLATION [LARGE SCALE ANALYSIS] AT SER-502</scope>
    <scope>IDENTIFICATION BY MASS SPECTROMETRY [LARGE SCALE ANALYSIS]</scope>
</reference>
<reference key="12">
    <citation type="journal article" date="2013" name="J. Proteome Res.">
        <title>Toward a comprehensive characterization of a human cancer cell phosphoproteome.</title>
        <authorList>
            <person name="Zhou H."/>
            <person name="Di Palma S."/>
            <person name="Preisinger C."/>
            <person name="Peng M."/>
            <person name="Polat A.N."/>
            <person name="Heck A.J."/>
            <person name="Mohammed S."/>
        </authorList>
    </citation>
    <scope>PHOSPHORYLATION [LARGE SCALE ANALYSIS] AT SER-96 AND SER-502</scope>
    <scope>IDENTIFICATION BY MASS SPECTROMETRY [LARGE SCALE ANALYSIS]</scope>
    <source>
        <tissue>Cervix carcinoma</tissue>
        <tissue>Erythroleukemia</tissue>
    </source>
</reference>
<reference key="13">
    <citation type="journal article" date="2014" name="J. Proteomics">
        <title>An enzyme assisted RP-RPLC approach for in-depth analysis of human liver phosphoproteome.</title>
        <authorList>
            <person name="Bian Y."/>
            <person name="Song C."/>
            <person name="Cheng K."/>
            <person name="Dong M."/>
            <person name="Wang F."/>
            <person name="Huang J."/>
            <person name="Sun D."/>
            <person name="Wang L."/>
            <person name="Ye M."/>
            <person name="Zou H."/>
        </authorList>
    </citation>
    <scope>IDENTIFICATION BY MASS SPECTROMETRY [LARGE SCALE ANALYSIS]</scope>
    <source>
        <tissue>Liver</tissue>
    </source>
</reference>
<reference key="14">
    <citation type="journal article" date="2007" name="Nature">
        <title>Patterns of somatic mutation in human cancer genomes.</title>
        <authorList>
            <person name="Greenman C."/>
            <person name="Stephens P."/>
            <person name="Smith R."/>
            <person name="Dalgliesh G.L."/>
            <person name="Hunter C."/>
            <person name="Bignell G."/>
            <person name="Davies H."/>
            <person name="Teague J."/>
            <person name="Butler A."/>
            <person name="Stevens C."/>
            <person name="Edkins S."/>
            <person name="O'Meara S."/>
            <person name="Vastrik I."/>
            <person name="Schmidt E.E."/>
            <person name="Avis T."/>
            <person name="Barthorpe S."/>
            <person name="Bhamra G."/>
            <person name="Buck G."/>
            <person name="Choudhury B."/>
            <person name="Clements J."/>
            <person name="Cole J."/>
            <person name="Dicks E."/>
            <person name="Forbes S."/>
            <person name="Gray K."/>
            <person name="Halliday K."/>
            <person name="Harrison R."/>
            <person name="Hills K."/>
            <person name="Hinton J."/>
            <person name="Jenkinson A."/>
            <person name="Jones D."/>
            <person name="Menzies A."/>
            <person name="Mironenko T."/>
            <person name="Perry J."/>
            <person name="Raine K."/>
            <person name="Richardson D."/>
            <person name="Shepherd R."/>
            <person name="Small A."/>
            <person name="Tofts C."/>
            <person name="Varian J."/>
            <person name="Webb T."/>
            <person name="West S."/>
            <person name="Widaa S."/>
            <person name="Yates A."/>
            <person name="Cahill D.P."/>
            <person name="Louis D.N."/>
            <person name="Goldstraw P."/>
            <person name="Nicholson A.G."/>
            <person name="Brasseur F."/>
            <person name="Looijenga L."/>
            <person name="Weber B.L."/>
            <person name="Chiew Y.-E."/>
            <person name="DeFazio A."/>
            <person name="Greaves M.F."/>
            <person name="Green A.R."/>
            <person name="Campbell P."/>
            <person name="Birney E."/>
            <person name="Easton D.F."/>
            <person name="Chenevix-Trench G."/>
            <person name="Tan M.-H."/>
            <person name="Khoo S.K."/>
            <person name="Teh B.T."/>
            <person name="Yuen S.T."/>
            <person name="Leung S.Y."/>
            <person name="Wooster R."/>
            <person name="Futreal P.A."/>
            <person name="Stratton M.R."/>
        </authorList>
    </citation>
    <scope>VARIANTS [LARGE SCALE ANALYSIS] ILE-278; LYS-339; LYS-514; CYS-539; CYS-546 AND MET-598</scope>
</reference>
<accession>Q13470</accession>
<accession>O95364</accession>
<accession>Q8IYI4</accession>
<comment type="function">
    <text evidence="6 8">Involved in negative regulation of cell growth. Has tumor suppressor properties. Plays a negative regulatory role in the Ras-MAPK pathway. May function in signaling pathways utilized broadly during fetal development and more selectively in adult tissues and in cells of the lymphohematopoietic system. Could specifically be involved in phospholipid signal transduction.</text>
</comment>
<comment type="catalytic activity">
    <reaction evidence="4">
        <text>L-tyrosyl-[protein] + ATP = O-phospho-L-tyrosyl-[protein] + ADP + H(+)</text>
        <dbReference type="Rhea" id="RHEA:10596"/>
        <dbReference type="Rhea" id="RHEA-COMP:10136"/>
        <dbReference type="Rhea" id="RHEA-COMP:20101"/>
        <dbReference type="ChEBI" id="CHEBI:15378"/>
        <dbReference type="ChEBI" id="CHEBI:30616"/>
        <dbReference type="ChEBI" id="CHEBI:46858"/>
        <dbReference type="ChEBI" id="CHEBI:61978"/>
        <dbReference type="ChEBI" id="CHEBI:456216"/>
        <dbReference type="EC" id="2.7.10.2"/>
    </reaction>
</comment>
<comment type="subunit">
    <text evidence="6">Interacts with the SH3 domain of PLCG1 via its Pro-rich domain.</text>
</comment>
<comment type="interaction">
    <interactant intactId="EBI-1383444">
        <id>Q13470</id>
    </interactant>
    <interactant intactId="EBI-476295">
        <id>P31947</id>
        <label>SFN</label>
    </interactant>
    <organismsDiffer>false</organismsDiffer>
    <experiments>3</experiments>
</comment>
<comment type="interaction">
    <interactant intactId="EBI-1383444">
        <id>Q13470</id>
    </interactant>
    <interactant intactId="EBI-356498">
        <id>P62258</id>
        <label>YWHAE</label>
    </interactant>
    <organismsDiffer>false</organismsDiffer>
    <experiments>4</experiments>
</comment>
<comment type="interaction">
    <interactant intactId="EBI-11018037">
        <id>Q13470-2</id>
    </interactant>
    <interactant intactId="EBI-11978259">
        <id>Q92567-2</id>
        <label>FAM168A</label>
    </interactant>
    <organismsDiffer>false</organismsDiffer>
    <experiments>3</experiments>
</comment>
<comment type="interaction">
    <interactant intactId="EBI-11018037">
        <id>Q13470-2</id>
    </interactant>
    <interactant intactId="EBI-12353035">
        <id>Q13322-4</id>
        <label>GRB10</label>
    </interactant>
    <organismsDiffer>false</organismsDiffer>
    <experiments>3</experiments>
</comment>
<comment type="interaction">
    <interactant intactId="EBI-11018037">
        <id>Q13470-2</id>
    </interactant>
    <interactant intactId="EBI-3957636">
        <id>Q8IYX7</id>
        <label>SAXO1</label>
    </interactant>
    <organismsDiffer>false</organismsDiffer>
    <experiments>3</experiments>
</comment>
<comment type="interaction">
    <interactant intactId="EBI-11018037">
        <id>Q13470-2</id>
    </interactant>
    <interactant intactId="EBI-12035119">
        <id>O75177-5</id>
        <label>SS18L1</label>
    </interactant>
    <organismsDiffer>false</organismsDiffer>
    <experiments>3</experiments>
</comment>
<comment type="interaction">
    <interactant intactId="EBI-11018037">
        <id>Q13470-2</id>
    </interactant>
    <interactant intactId="EBI-10177272">
        <id>P15622-3</id>
        <label>ZNF250</label>
    </interactant>
    <organismsDiffer>false</organismsDiffer>
    <experiments>3</experiments>
</comment>
<comment type="interaction">
    <interactant intactId="EBI-11018037">
        <id>Q13470-2</id>
    </interactant>
    <interactant intactId="EBI-7233259">
        <id>Q86UD4</id>
        <label>ZNF329</label>
    </interactant>
    <organismsDiffer>false</organismsDiffer>
    <experiments>3</experiments>
</comment>
<comment type="subcellular location">
    <subcellularLocation>
        <location evidence="6">Cytoplasm</location>
    </subcellularLocation>
    <subcellularLocation>
        <location evidence="6">Membrane</location>
        <topology evidence="6">Peripheral membrane protein</topology>
    </subcellularLocation>
</comment>
<comment type="alternative products">
    <event type="alternative splicing"/>
    <isoform>
        <id>Q13470-1</id>
        <name evidence="9">1</name>
        <sequence type="displayed"/>
    </isoform>
    <isoform>
        <id>Q13470-2</id>
        <name evidence="12">2</name>
        <sequence type="described" ref="VSP_051663"/>
    </isoform>
</comment>
<comment type="tissue specificity">
    <text evidence="6 9">Expressed in all umbilical cord blood, bone marrow and adult blood cell sub-populations and in several leukemia cell lines. Highly expressed in fetal blood, brain, lung, liver and kidney. Detected at lower levels in adult prostate, testis, ovary, small intestine and colon. Not expressed in adult lung, liver, kidney or brain.</text>
</comment>
<comment type="PTM">
    <text evidence="6">Autophosphorylated on tyrosine residues.</text>
</comment>
<comment type="similarity">
    <text evidence="2">Belongs to the protein kinase superfamily. Tyr protein kinase family.</text>
</comment>
<protein>
    <recommendedName>
        <fullName>Non-receptor tyrosine-protein kinase TNK1</fullName>
        <ecNumber>2.7.10.2</ecNumber>
    </recommendedName>
    <alternativeName>
        <fullName>CD38 negative kinase 1</fullName>
    </alternativeName>
</protein>
<sequence>MLPEAGSLWLLKLLRDIQLAQFYWPILEELNVTRPEHFDFVKPEDLDGIGMGRPAQRRLSEALKRLRSGPKSKNWVYKILGGFAPEHKEPTLPSDSPRHLPEPEGGLKCLIPEGAVCRGELLGSGCFGVVHRGLWTLPSGKSVPVAVKSLRVGPEGPMGTELGDFLREVSVMMNLEHPHVLRLHGLVLGQPLQMVMELAPLGSLHARLTAPAPTPPLLVALLCLFLRQLAGAMAYLGARGLVHRDLATRNLLLASPRTIKVADFGLVRPLGGARGRYVMGGPRPIPYAWCAPESLRHGAFSSASDVWMFGVTLWEMFSGGEEPWAGVPPYLILQRLEDRARLPRPPLCSRALYSLALRCWAPHPADRPSFSHLEGLLQEAGPSEACCVRDVTEPGALRMETGDPITVIEGSSSFHSPDSTIWKGQNGRTFKVGSFPASAVTLADAGGLPATRPVHRGTPARGDQHPGSIDGDRKKANLWDAPPARGQRRNMPLERMKGISRSLESVLSLGPRPTGGGSSPPEIRQARAVPQGPPGLPPRPPLSSSSPQPSQPSRERLPWPKRKPPHNHPMGMPGARKAAALSGGLLSDPELQRKIMEVELSVHGVTHQECQTALGATGGDVVSAIRNLKVDQLFHLSSRSRADCWRILEHYQWDLSAASRYVLARP</sequence>
<feature type="chain" id="PRO_0000088173" description="Non-receptor tyrosine-protein kinase TNK1">
    <location>
        <begin position="1"/>
        <end position="666"/>
    </location>
</feature>
<feature type="domain" description="Protein kinase" evidence="2">
    <location>
        <begin position="116"/>
        <end position="377"/>
    </location>
</feature>
<feature type="domain" description="SH3" evidence="3">
    <location>
        <begin position="380"/>
        <end position="445"/>
    </location>
</feature>
<feature type="region of interest" description="Disordered" evidence="5">
    <location>
        <begin position="446"/>
        <end position="493"/>
    </location>
</feature>
<feature type="region of interest" description="Disordered" evidence="5">
    <location>
        <begin position="506"/>
        <end position="579"/>
    </location>
</feature>
<feature type="compositionally biased region" description="Pro residues" evidence="5">
    <location>
        <begin position="531"/>
        <end position="541"/>
    </location>
</feature>
<feature type="compositionally biased region" description="Low complexity" evidence="5">
    <location>
        <begin position="542"/>
        <end position="552"/>
    </location>
</feature>
<feature type="active site" description="Proton acceptor" evidence="1 2 4">
    <location>
        <position position="245"/>
    </location>
</feature>
<feature type="binding site" evidence="1 2">
    <location>
        <begin position="122"/>
        <end position="130"/>
    </location>
    <ligand>
        <name>ATP</name>
        <dbReference type="ChEBI" id="CHEBI:30616"/>
    </ligand>
</feature>
<feature type="binding site" evidence="1 2">
    <location>
        <position position="148"/>
    </location>
    <ligand>
        <name>ATP</name>
        <dbReference type="ChEBI" id="CHEBI:30616"/>
    </ligand>
</feature>
<feature type="modified residue" description="Phosphoserine" evidence="17">
    <location>
        <position position="60"/>
    </location>
</feature>
<feature type="modified residue" description="Phosphoserine" evidence="21">
    <location>
        <position position="96"/>
    </location>
</feature>
<feature type="modified residue" description="Phosphoserine" evidence="17 18">
    <location>
        <position position="255"/>
    </location>
</feature>
<feature type="modified residue" description="Phosphoserine" evidence="16 17 18 19 20 21">
    <location>
        <position position="502"/>
    </location>
</feature>
<feature type="modified residue" description="Phosphothreonine" evidence="17 19">
    <location>
        <position position="514"/>
    </location>
</feature>
<feature type="modified residue" description="Phosphoserine" evidence="16">
    <location>
        <position position="519"/>
    </location>
</feature>
<feature type="modified residue" description="Phosphoserine" evidence="17">
    <location>
        <position position="582"/>
    </location>
</feature>
<feature type="splice variant" id="VSP_051663" description="In isoform 2." evidence="11">
    <location>
        <begin position="411"/>
        <end position="415"/>
    </location>
</feature>
<feature type="sequence variant" id="VAR_041863" description="In dbSNP:rs55939858." evidence="7">
    <original>V</original>
    <variation>I</variation>
    <location>
        <position position="278"/>
    </location>
</feature>
<feature type="sequence variant" id="VAR_041864" description="In a lung adenocarcinoma sample; somatic mutation." evidence="7">
    <original>R</original>
    <variation>K</variation>
    <location>
        <position position="339"/>
    </location>
</feature>
<feature type="sequence variant" id="VAR_041865" description="In dbSNP:rs55641092." evidence="7">
    <original>T</original>
    <variation>K</variation>
    <location>
        <position position="514"/>
    </location>
</feature>
<feature type="sequence variant" id="VAR_041866" description="In dbSNP:rs36046975." evidence="7">
    <original>R</original>
    <variation>C</variation>
    <location>
        <position position="539"/>
    </location>
</feature>
<feature type="sequence variant" id="VAR_041867" description="In dbSNP:rs56093628." evidence="7">
    <original>S</original>
    <variation>C</variation>
    <location>
        <position position="546"/>
    </location>
</feature>
<feature type="sequence variant" id="VAR_041868" description="In dbSNP:rs6503018." evidence="7 9 10">
    <original>V</original>
    <variation>M</variation>
    <location>
        <position position="598"/>
    </location>
</feature>
<feature type="sequence conflict" description="In Ref. 1; AAC50427." evidence="12" ref="1">
    <original>E</original>
    <variation>G</variation>
    <location>
        <position position="36"/>
    </location>
</feature>
<feature type="sequence conflict" description="In Ref. 1; AAC50427." evidence="12" ref="1">
    <original>R</original>
    <variation>S</variation>
    <location>
        <position position="65"/>
    </location>
</feature>
<feature type="sequence conflict" description="In Ref. 1; AAC50427." evidence="12" ref="1">
    <original>S</original>
    <variation>T</variation>
    <location>
        <position position="94"/>
    </location>
</feature>
<feature type="sequence conflict" description="In Ref. 2; AAC99412." evidence="12" ref="2">
    <original>R</original>
    <variation>K</variation>
    <location>
        <position position="118"/>
    </location>
</feature>
<feature type="sequence conflict" description="In Ref. 1; AAC50427." evidence="12" ref="1">
    <original>L</original>
    <variation>Q</variation>
    <location>
        <position position="252"/>
    </location>
</feature>
<feature type="sequence conflict" description="In Ref. 1; AAC50427." evidence="12" ref="1">
    <original>A</original>
    <variation>T</variation>
    <location>
        <position position="288"/>
    </location>
</feature>
<feature type="sequence conflict" description="In Ref. 1; AAC50427." evidence="12" ref="1">
    <original>A</original>
    <variation>P</variation>
    <location>
        <position position="325"/>
    </location>
</feature>
<feature type="sequence conflict" description="In Ref. 1; AAC50427." evidence="12" ref="1">
    <original>LC</original>
    <variation>PS</variation>
    <location>
        <begin position="347"/>
        <end position="348"/>
    </location>
</feature>
<feature type="sequence conflict" description="In Ref. 1; AAC50427." evidence="12" ref="1">
    <original>V</original>
    <variation>A</variation>
    <location>
        <position position="391"/>
    </location>
</feature>
<feature type="sequence conflict" description="In Ref. 1; AAC50427." evidence="12" ref="1">
    <original>G</original>
    <variation>D</variation>
    <location>
        <position position="424"/>
    </location>
</feature>
<feature type="sequence conflict" description="In Ref. 1; AAC50427." evidence="12" ref="1">
    <original>A</original>
    <variation>T</variation>
    <location>
        <position position="443"/>
    </location>
</feature>
<feature type="sequence conflict" description="In Ref. 1; AAC50427." evidence="12" ref="1">
    <original>K</original>
    <variation>E</variation>
    <location>
        <position position="561"/>
    </location>
</feature>
<feature type="sequence conflict" description="In Ref. 1; AAC50427." evidence="12" ref="1">
    <original>G</original>
    <variation>W</variation>
    <location>
        <position position="604"/>
    </location>
</feature>
<feature type="sequence conflict" description="In Ref. 1; AAC50427." evidence="12" ref="1">
    <original>V</original>
    <variation>A</variation>
    <location>
        <position position="622"/>
    </location>
</feature>
<feature type="sequence conflict" description="In Ref. 1; AAC50427." evidence="12" ref="1">
    <original>H</original>
    <variation>L</variation>
    <location>
        <position position="635"/>
    </location>
</feature>
<feature type="helix" evidence="22">
    <location>
        <begin position="590"/>
        <end position="601"/>
    </location>
</feature>
<feature type="helix" evidence="22">
    <location>
        <begin position="607"/>
        <end position="616"/>
    </location>
</feature>
<feature type="turn" evidence="22">
    <location>
        <begin position="617"/>
        <end position="619"/>
    </location>
</feature>
<feature type="helix" evidence="22">
    <location>
        <begin position="621"/>
        <end position="636"/>
    </location>
</feature>
<feature type="strand" evidence="22">
    <location>
        <begin position="637"/>
        <end position="639"/>
    </location>
</feature>
<feature type="helix" evidence="22">
    <location>
        <begin position="641"/>
        <end position="650"/>
    </location>
</feature>
<feature type="turn" evidence="22">
    <location>
        <begin position="651"/>
        <end position="653"/>
    </location>
</feature>
<feature type="helix" evidence="22">
    <location>
        <begin position="655"/>
        <end position="664"/>
    </location>
</feature>
<feature type="modified residue" description="Phosphoserine" evidence="17 18">
    <location sequence="Q13470-2">
        <position position="411"/>
    </location>
</feature>
<evidence type="ECO:0000250" key="1">
    <source>
        <dbReference type="UniProtKB" id="P12931"/>
    </source>
</evidence>
<evidence type="ECO:0000255" key="2">
    <source>
        <dbReference type="PROSITE-ProRule" id="PRU00159"/>
    </source>
</evidence>
<evidence type="ECO:0000255" key="3">
    <source>
        <dbReference type="PROSITE-ProRule" id="PRU00192"/>
    </source>
</evidence>
<evidence type="ECO:0000255" key="4">
    <source>
        <dbReference type="PROSITE-ProRule" id="PRU10028"/>
    </source>
</evidence>
<evidence type="ECO:0000256" key="5">
    <source>
        <dbReference type="SAM" id="MobiDB-lite"/>
    </source>
</evidence>
<evidence type="ECO:0000269" key="6">
    <source>
    </source>
</evidence>
<evidence type="ECO:0000269" key="7">
    <source>
    </source>
</evidence>
<evidence type="ECO:0000269" key="8">
    <source>
    </source>
</evidence>
<evidence type="ECO:0000269" key="9">
    <source>
    </source>
</evidence>
<evidence type="ECO:0000269" key="10">
    <source ref="2"/>
</evidence>
<evidence type="ECO:0000303" key="11">
    <source>
    </source>
</evidence>
<evidence type="ECO:0000305" key="12"/>
<evidence type="ECO:0000312" key="13">
    <source>
        <dbReference type="EMBL" id="AAC50427.1"/>
    </source>
</evidence>
<evidence type="ECO:0000312" key="14">
    <source>
        <dbReference type="EMBL" id="AAC99412.1"/>
    </source>
</evidence>
<evidence type="ECO:0000312" key="15">
    <source>
        <dbReference type="EMBL" id="AAH35782.1"/>
    </source>
</evidence>
<evidence type="ECO:0007744" key="16">
    <source>
    </source>
</evidence>
<evidence type="ECO:0007744" key="17">
    <source>
    </source>
</evidence>
<evidence type="ECO:0007744" key="18">
    <source>
    </source>
</evidence>
<evidence type="ECO:0007744" key="19">
    <source>
    </source>
</evidence>
<evidence type="ECO:0007744" key="20">
    <source>
    </source>
</evidence>
<evidence type="ECO:0007744" key="21">
    <source>
    </source>
</evidence>
<evidence type="ECO:0007829" key="22">
    <source>
        <dbReference type="PDB" id="7TDY"/>
    </source>
</evidence>
<organism>
    <name type="scientific">Homo sapiens</name>
    <name type="common">Human</name>
    <dbReference type="NCBI Taxonomy" id="9606"/>
    <lineage>
        <taxon>Eukaryota</taxon>
        <taxon>Metazoa</taxon>
        <taxon>Chordata</taxon>
        <taxon>Craniata</taxon>
        <taxon>Vertebrata</taxon>
        <taxon>Euteleostomi</taxon>
        <taxon>Mammalia</taxon>
        <taxon>Eutheria</taxon>
        <taxon>Euarchontoglires</taxon>
        <taxon>Primates</taxon>
        <taxon>Haplorrhini</taxon>
        <taxon>Catarrhini</taxon>
        <taxon>Hominidae</taxon>
        <taxon>Homo</taxon>
    </lineage>
</organism>